<protein>
    <recommendedName>
        <fullName>Guanine nucleotide-binding protein G(t) subunit alpha-1</fullName>
    </recommendedName>
    <alternativeName>
        <fullName>Transducin alpha-1 chain</fullName>
    </alternativeName>
</protein>
<gene>
    <name type="primary">GNAT1</name>
</gene>
<name>GNAT1_BOVIN</name>
<evidence type="ECO:0000250" key="1">
    <source>
        <dbReference type="UniProtKB" id="P11488"/>
    </source>
</evidence>
<evidence type="ECO:0000250" key="2">
    <source>
        <dbReference type="UniProtKB" id="P20612"/>
    </source>
</evidence>
<evidence type="ECO:0000255" key="3">
    <source>
        <dbReference type="PROSITE-ProRule" id="PRU01230"/>
    </source>
</evidence>
<evidence type="ECO:0000256" key="4">
    <source>
        <dbReference type="SAM" id="MobiDB-lite"/>
    </source>
</evidence>
<evidence type="ECO:0000269" key="5">
    <source>
    </source>
</evidence>
<evidence type="ECO:0000269" key="6">
    <source>
    </source>
</evidence>
<evidence type="ECO:0000269" key="7">
    <source>
    </source>
</evidence>
<evidence type="ECO:0000269" key="8">
    <source>
    </source>
</evidence>
<evidence type="ECO:0000269" key="9">
    <source>
    </source>
</evidence>
<evidence type="ECO:0000269" key="10">
    <source>
    </source>
</evidence>
<evidence type="ECO:0000269" key="11">
    <source>
    </source>
</evidence>
<evidence type="ECO:0000269" key="12">
    <source>
    </source>
</evidence>
<evidence type="ECO:0000269" key="13">
    <source>
    </source>
</evidence>
<evidence type="ECO:0000269" key="14">
    <source>
    </source>
</evidence>
<evidence type="ECO:0000269" key="15">
    <source>
    </source>
</evidence>
<evidence type="ECO:0000269" key="16">
    <source>
    </source>
</evidence>
<evidence type="ECO:0000269" key="17">
    <source>
    </source>
</evidence>
<evidence type="ECO:0000305" key="18">
    <source>
    </source>
</evidence>
<evidence type="ECO:0000305" key="19">
    <source>
    </source>
</evidence>
<evidence type="ECO:0000305" key="20">
    <source>
    </source>
</evidence>
<evidence type="ECO:0000305" key="21">
    <source>
    </source>
</evidence>
<evidence type="ECO:0007744" key="22">
    <source>
        <dbReference type="PDB" id="1FQJ"/>
    </source>
</evidence>
<evidence type="ECO:0007744" key="23">
    <source>
        <dbReference type="PDB" id="1FQK"/>
    </source>
</evidence>
<evidence type="ECO:0007744" key="24">
    <source>
        <dbReference type="PDB" id="1GOT"/>
    </source>
</evidence>
<evidence type="ECO:0007744" key="25">
    <source>
        <dbReference type="PDB" id="1TAD"/>
    </source>
</evidence>
<evidence type="ECO:0007744" key="26">
    <source>
        <dbReference type="PDB" id="1TAG"/>
    </source>
</evidence>
<evidence type="ECO:0007744" key="27">
    <source>
        <dbReference type="PDB" id="1TND"/>
    </source>
</evidence>
<evidence type="ECO:0007744" key="28">
    <source>
        <dbReference type="PDB" id="2X72"/>
    </source>
</evidence>
<evidence type="ECO:0007744" key="29">
    <source>
        <dbReference type="PDB" id="3DQB"/>
    </source>
</evidence>
<evidence type="ECO:0007744" key="30">
    <source>
        <dbReference type="PDB" id="3PQR"/>
    </source>
</evidence>
<evidence type="ECO:0007744" key="31">
    <source>
        <dbReference type="PDB" id="3V00"/>
    </source>
</evidence>
<evidence type="ECO:0007744" key="32">
    <source>
        <dbReference type="PDB" id="4BEY"/>
    </source>
</evidence>
<evidence type="ECO:0007829" key="33">
    <source>
        <dbReference type="PDB" id="1AQG"/>
    </source>
</evidence>
<evidence type="ECO:0007829" key="34">
    <source>
        <dbReference type="PDB" id="1GOT"/>
    </source>
</evidence>
<evidence type="ECO:0007829" key="35">
    <source>
        <dbReference type="PDB" id="1TAD"/>
    </source>
</evidence>
<evidence type="ECO:0007829" key="36">
    <source>
        <dbReference type="PDB" id="3V00"/>
    </source>
</evidence>
<evidence type="ECO:0007829" key="37">
    <source>
        <dbReference type="PDB" id="7JSN"/>
    </source>
</evidence>
<evidence type="ECO:0007829" key="38">
    <source>
        <dbReference type="PDB" id="8XGR"/>
    </source>
</evidence>
<organism>
    <name type="scientific">Bos taurus</name>
    <name type="common">Bovine</name>
    <dbReference type="NCBI Taxonomy" id="9913"/>
    <lineage>
        <taxon>Eukaryota</taxon>
        <taxon>Metazoa</taxon>
        <taxon>Chordata</taxon>
        <taxon>Craniata</taxon>
        <taxon>Vertebrata</taxon>
        <taxon>Euteleostomi</taxon>
        <taxon>Mammalia</taxon>
        <taxon>Eutheria</taxon>
        <taxon>Laurasiatheria</taxon>
        <taxon>Artiodactyla</taxon>
        <taxon>Ruminantia</taxon>
        <taxon>Pecora</taxon>
        <taxon>Bovidae</taxon>
        <taxon>Bovinae</taxon>
        <taxon>Bos</taxon>
    </lineage>
</organism>
<feature type="initiator methionine" description="Removed">
    <location>
        <position position="1"/>
    </location>
</feature>
<feature type="chain" id="PRO_0000203735" description="Guanine nucleotide-binding protein G(t) subunit alpha-1">
    <location>
        <begin position="2"/>
        <end position="350"/>
    </location>
</feature>
<feature type="domain" description="G-alpha" evidence="3">
    <location>
        <begin position="28"/>
        <end position="350"/>
    </location>
</feature>
<feature type="region of interest" description="Disordered" evidence="4">
    <location>
        <begin position="1"/>
        <end position="21"/>
    </location>
</feature>
<feature type="region of interest" description="G1 motif" evidence="3">
    <location>
        <begin position="31"/>
        <end position="44"/>
    </location>
</feature>
<feature type="region of interest" description="G2 motif" evidence="3">
    <location>
        <begin position="169"/>
        <end position="177"/>
    </location>
</feature>
<feature type="region of interest" description="G3 motif" evidence="3">
    <location>
        <begin position="192"/>
        <end position="201"/>
    </location>
</feature>
<feature type="region of interest" description="G4 motif" evidence="3">
    <location>
        <begin position="261"/>
        <end position="268"/>
    </location>
</feature>
<feature type="region of interest" description="G5 motif" evidence="3">
    <location>
        <begin position="320"/>
        <end position="325"/>
    </location>
</feature>
<feature type="region of interest" description="Interaction with RHO" evidence="7 9 10 12 17">
    <location>
        <begin position="340"/>
        <end position="350"/>
    </location>
</feature>
<feature type="compositionally biased region" description="Basic and acidic residues" evidence="4">
    <location>
        <begin position="7"/>
        <end position="21"/>
    </location>
</feature>
<feature type="binding site" evidence="14 15 16 22 23 24 25 26 27 31">
    <location>
        <begin position="36"/>
        <end position="43"/>
    </location>
    <ligand>
        <name>GTP</name>
        <dbReference type="ChEBI" id="CHEBI:37565"/>
    </ligand>
</feature>
<feature type="binding site" evidence="3">
    <location>
        <position position="43"/>
    </location>
    <ligand>
        <name>Mg(2+)</name>
        <dbReference type="ChEBI" id="CHEBI:18420"/>
    </ligand>
</feature>
<feature type="binding site" evidence="14 15 16 22 23 24 25 26 27 31">
    <location>
        <position position="146"/>
    </location>
    <ligand>
        <name>GTP</name>
        <dbReference type="ChEBI" id="CHEBI:37565"/>
    </ligand>
</feature>
<feature type="binding site" evidence="14 15 16 22 23 24 25 26 27 31">
    <location>
        <begin position="171"/>
        <end position="177"/>
    </location>
    <ligand>
        <name>GTP</name>
        <dbReference type="ChEBI" id="CHEBI:37565"/>
    </ligand>
</feature>
<feature type="binding site" evidence="3">
    <location>
        <position position="177"/>
    </location>
    <ligand>
        <name>Mg(2+)</name>
        <dbReference type="ChEBI" id="CHEBI:18420"/>
    </ligand>
</feature>
<feature type="binding site" evidence="16 27">
    <location>
        <position position="199"/>
    </location>
    <ligand>
        <name>GTP</name>
        <dbReference type="ChEBI" id="CHEBI:37565"/>
    </ligand>
</feature>
<feature type="binding site" evidence="14 15 16 24 25 26 27">
    <location>
        <begin position="265"/>
        <end position="268"/>
    </location>
    <ligand>
        <name>GTP</name>
        <dbReference type="ChEBI" id="CHEBI:37565"/>
    </ligand>
</feature>
<feature type="binding site" evidence="16 27">
    <location>
        <position position="322"/>
    </location>
    <ligand>
        <name>GTP</name>
        <dbReference type="ChEBI" id="CHEBI:37565"/>
    </ligand>
</feature>
<feature type="modified residue" description="Phosphotyrosine" evidence="1">
    <location>
        <position position="142"/>
    </location>
</feature>
<feature type="lipid moiety-binding region" description="N-myristoyl glycine" evidence="6">
    <location>
        <position position="2"/>
    </location>
</feature>
<feature type="mutagenesis site" description="Facilitated GDP-GTP exchange, increasing the levels of the activated GTP-bound form." evidence="8">
    <original>S</original>
    <variation>N</variation>
    <location>
        <position position="43"/>
    </location>
</feature>
<feature type="helix" evidence="34">
    <location>
        <begin position="7"/>
        <end position="27"/>
    </location>
</feature>
<feature type="strand" evidence="35">
    <location>
        <begin position="28"/>
        <end position="35"/>
    </location>
</feature>
<feature type="strand" evidence="38">
    <location>
        <begin position="38"/>
        <end position="41"/>
    </location>
</feature>
<feature type="helix" evidence="35">
    <location>
        <begin position="42"/>
        <end position="53"/>
    </location>
</feature>
<feature type="helix" evidence="35">
    <location>
        <begin position="59"/>
        <end position="86"/>
    </location>
</feature>
<feature type="helix" evidence="35">
    <location>
        <begin position="96"/>
        <end position="109"/>
    </location>
</feature>
<feature type="helix" evidence="35">
    <location>
        <begin position="117"/>
        <end position="128"/>
    </location>
</feature>
<feature type="helix" evidence="35">
    <location>
        <begin position="130"/>
        <end position="137"/>
    </location>
</feature>
<feature type="helix" evidence="35">
    <location>
        <begin position="138"/>
        <end position="141"/>
    </location>
</feature>
<feature type="helix" evidence="35">
    <location>
        <begin position="148"/>
        <end position="152"/>
    </location>
</feature>
<feature type="helix" evidence="35">
    <location>
        <begin position="155"/>
        <end position="158"/>
    </location>
</feature>
<feature type="strand" evidence="36">
    <location>
        <begin position="160"/>
        <end position="162"/>
    </location>
</feature>
<feature type="helix" evidence="35">
    <location>
        <begin position="167"/>
        <end position="172"/>
    </location>
</feature>
<feature type="strand" evidence="35">
    <location>
        <begin position="181"/>
        <end position="187"/>
    </location>
</feature>
<feature type="strand" evidence="35">
    <location>
        <begin position="190"/>
        <end position="196"/>
    </location>
</feature>
<feature type="helix" evidence="35">
    <location>
        <begin position="201"/>
        <end position="204"/>
    </location>
</feature>
<feature type="helix" evidence="35">
    <location>
        <begin position="205"/>
        <end position="210"/>
    </location>
</feature>
<feature type="turn" evidence="37">
    <location>
        <begin position="211"/>
        <end position="213"/>
    </location>
</feature>
<feature type="strand" evidence="35">
    <location>
        <begin position="215"/>
        <end position="222"/>
    </location>
</feature>
<feature type="helix" evidence="35">
    <location>
        <begin position="223"/>
        <end position="227"/>
    </location>
</feature>
<feature type="helix" evidence="35">
    <location>
        <begin position="238"/>
        <end position="250"/>
    </location>
</feature>
<feature type="helix" evidence="35">
    <location>
        <begin position="253"/>
        <end position="255"/>
    </location>
</feature>
<feature type="strand" evidence="35">
    <location>
        <begin position="258"/>
        <end position="265"/>
    </location>
</feature>
<feature type="helix" evidence="35">
    <location>
        <begin position="267"/>
        <end position="273"/>
    </location>
</feature>
<feature type="turn" evidence="35">
    <location>
        <begin position="274"/>
        <end position="276"/>
    </location>
</feature>
<feature type="helix" evidence="35">
    <location>
        <begin position="279"/>
        <end position="281"/>
    </location>
</feature>
<feature type="helix" evidence="38">
    <location>
        <begin position="285"/>
        <end position="287"/>
    </location>
</feature>
<feature type="helix" evidence="35">
    <location>
        <begin position="292"/>
        <end position="304"/>
    </location>
</feature>
<feature type="turn" evidence="35">
    <location>
        <begin position="308"/>
        <end position="312"/>
    </location>
</feature>
<feature type="strand" evidence="35">
    <location>
        <begin position="316"/>
        <end position="319"/>
    </location>
</feature>
<feature type="helix" evidence="35">
    <location>
        <begin position="325"/>
        <end position="341"/>
    </location>
</feature>
<feature type="helix" evidence="33">
    <location>
        <begin position="342"/>
        <end position="345"/>
    </location>
</feature>
<feature type="turn" evidence="33">
    <location>
        <begin position="346"/>
        <end position="348"/>
    </location>
</feature>
<accession>P04695</accession>
<sequence length="350" mass="39966">MGAGASAEEKHSRELEKKLKEDAEKDARTVKLLLLGAGESGKSTIVKQMKIIHQDGYSLEECLEFIAIIYGNTLQSILAIVRAMTTLNIQYGDSARQDDARKLMHMADTIEEGTMPKEMSDIIQRLWKDSGIQACFDRASEYQLNDSAGYYLSDLERLVTPGYVPTEQDVLRSRVKTTGIIETQFSFKDLNFRMFDVGGQRSERKKWIHCFEGVTCIIFIAALSAYDMVLVEDDEVNRMHESLHLFNSICNHRYFATTSIVLFLNKKDVFSEKIKKAHLSICFPDYNGPNTYEDAGNYIKVQFLELNMRRDVKEIYSHMTCATDTQNVKFVFDAVTDIIIKENLKDCGLF</sequence>
<keyword id="KW-0002">3D-structure</keyword>
<keyword id="KW-0966">Cell projection</keyword>
<keyword id="KW-0903">Direct protein sequencing</keyword>
<keyword id="KW-0342">GTP-binding</keyword>
<keyword id="KW-0449">Lipoprotein</keyword>
<keyword id="KW-0460">Magnesium</keyword>
<keyword id="KW-0472">Membrane</keyword>
<keyword id="KW-0479">Metal-binding</keyword>
<keyword id="KW-0519">Myristate</keyword>
<keyword id="KW-0547">Nucleotide-binding</keyword>
<keyword id="KW-0597">Phosphoprotein</keyword>
<keyword id="KW-1185">Reference proteome</keyword>
<keyword id="KW-0716">Sensory transduction</keyword>
<keyword id="KW-0807">Transducer</keyword>
<keyword id="KW-0844">Vision</keyword>
<proteinExistence type="evidence at protein level"/>
<reference key="1">
    <citation type="journal article" date="1985" name="Proc. Natl. Acad. Sci. U.S.A.">
        <title>Amino acid sequence of the alpha subunit of transducin deduced from the cDNA sequence.</title>
        <authorList>
            <person name="Medynski D.C."/>
            <person name="Sullivan K."/>
            <person name="Smith D."/>
            <person name="van Dop C."/>
            <person name="Chang F.-H."/>
            <person name="Fung B.K.-K."/>
            <person name="Seeburg P.H."/>
            <person name="Bourne H.R."/>
        </authorList>
    </citation>
    <scope>NUCLEOTIDE SEQUENCE [MRNA]</scope>
</reference>
<reference key="2">
    <citation type="journal article" date="1985" name="Proc. Natl. Acad. Sci. U.S.A.">
        <title>GTPase of bovine rod outer segments: the amino acid sequence of the alpha subunit as derived from the cDNA sequence.</title>
        <authorList>
            <person name="Yatsunami K."/>
            <person name="Khorana H.G."/>
        </authorList>
    </citation>
    <scope>NUCLEOTIDE SEQUENCE [MRNA]</scope>
</reference>
<reference key="3">
    <citation type="journal article" date="1985" name="Nature">
        <title>Primary structure of the alpha-subunit of transducin and its relationship to ras proteins.</title>
        <authorList>
            <person name="Tanaba T."/>
            <person name="Nukada T."/>
            <person name="Nishikawa Y."/>
            <person name="Sugimoto K."/>
            <person name="Suzuki H."/>
            <person name="Takahashi H."/>
            <person name="Noda M."/>
            <person name="Haga T."/>
            <person name="Ichiyama A."/>
            <person name="Kangawa K."/>
            <person name="Minamino N."/>
            <person name="Matsuo H."/>
            <person name="Numa S."/>
        </authorList>
    </citation>
    <scope>NUCLEOTIDE SEQUENCE [MRNA]</scope>
</reference>
<reference key="4">
    <citation type="journal article" date="1985" name="Bioorg. Khim.">
        <title>Isolation and characteristics of cyanogen bromide peptides of transducin alpha and beta subunits.</title>
        <authorList>
            <person name="Lipkin V.M."/>
            <person name="Obukhov A.N."/>
            <person name="Bogachuk A.P."/>
            <person name="Telezhinskaya I.N."/>
            <person name="Shemyakin V.V."/>
        </authorList>
    </citation>
    <scope>PARTIAL PROTEIN SEQUENCE</scope>
</reference>
<reference key="5">
    <citation type="journal article" date="1992" name="Nature">
        <title>Lipid modification at the N-terminus of photoreceptor G-protein alpha-subunit.</title>
        <authorList>
            <person name="Kokame K."/>
            <person name="Fukada Y."/>
            <person name="Yoshizawa T."/>
            <person name="Takao T."/>
            <person name="Shimonishi Y."/>
        </authorList>
    </citation>
    <scope>MYRISTOYLATION AT GLY-2</scope>
</reference>
<reference key="6">
    <citation type="journal article" date="2011" name="J. Biol. Chem.">
        <title>A dominant-negative Galpha mutant that traps a stable rhodopsin-Galpha-GTP-betagamma complex.</title>
        <authorList>
            <person name="Ramachandran S."/>
            <person name="Cerione R.A."/>
        </authorList>
    </citation>
    <scope>FUNCTION</scope>
    <scope>MUTAGENESIS OF SER-43</scope>
    <scope>SUBUNIT</scope>
</reference>
<reference key="7">
    <citation type="journal article" date="2013" name="FASEB J.">
        <title>Asymmetry of the rhodopsin dimer in complex with transducin.</title>
        <authorList>
            <person name="Jastrzebska B."/>
            <person name="Orban T."/>
            <person name="Golczak M."/>
            <person name="Engel A."/>
            <person name="Palczewski K."/>
        </authorList>
    </citation>
    <scope>FUNCTION</scope>
    <scope>SUBUNIT</scope>
    <scope>SUBCELLULAR LOCATION</scope>
</reference>
<reference key="8">
    <citation type="journal article" date="2017" name="J. Biol. Chem.">
        <title>Isolation and structure-function characterization of a signaling-active rhodopsin-G protein complex.</title>
        <authorList>
            <person name="Gao Y."/>
            <person name="Westfield G."/>
            <person name="Erickson J.W."/>
            <person name="Cerione R.A."/>
            <person name="Skiniotis G."/>
            <person name="Ramachandran S."/>
        </authorList>
    </citation>
    <scope>FUNCTION</scope>
    <scope>SUBUNIT</scope>
    <scope>SUBCELLULAR LOCATION</scope>
</reference>
<reference evidence="27" key="9">
    <citation type="journal article" date="1993" name="Nature">
        <title>The 2.2 A crystal structure of transducin-alpha complexed with GTP gamma S.</title>
        <authorList>
            <person name="Noel J.P."/>
            <person name="Hamm H.E."/>
            <person name="Sigler P.B."/>
        </authorList>
    </citation>
    <scope>X-RAY CRYSTALLOGRAPHY (2.2 ANGSTROMS) OF 27-350 IN COMPLEX WITH GTP ANALOG</scope>
    <scope>FUNCTION</scope>
</reference>
<reference evidence="26" key="10">
    <citation type="journal article" date="1994" name="Nature">
        <title>Structural determinants for activation of the alpha-subunit of a heterotrimeric G protein.</title>
        <authorList>
            <person name="Lambright D.G."/>
            <person name="Noel J.P."/>
            <person name="Hamm H.E."/>
            <person name="Sigler P.B."/>
        </authorList>
    </citation>
    <scope>X-RAY CRYSTALLOGRAPHY (1.8 ANGSTROMS) OF 27-350 IN COMPLEX WITH GDP</scope>
</reference>
<reference evidence="25" key="11">
    <citation type="journal article" date="1994" name="Nature">
        <title>GTPase mechanism of Gproteins from the 1.7-A crystal structure of transducin alpha-GDP-AIF-4.</title>
        <authorList>
            <person name="Sondek J."/>
            <person name="Lambright D.G."/>
            <person name="Noel J.P."/>
            <person name="Hamm H.E."/>
            <person name="Sigler P.B."/>
        </authorList>
    </citation>
    <scope>X-RAY CRYSTALLOGRAPHY (1.7 ANGSTROMS) OF 27-350 IN COMPLEX WITH GTP ANALOG</scope>
</reference>
<reference key="12">
    <citation type="journal article" date="1998" name="Proc. Natl. Acad. Sci. U.S.A.">
        <title>Light-activated rhodopsin induces structural binding motif in G protein alpha subunit.</title>
        <authorList>
            <person name="Kisselev O.G."/>
            <person name="Kao J."/>
            <person name="Ponder J.W."/>
            <person name="Fann Y.C."/>
            <person name="Gautam N."/>
            <person name="Marshall G.R."/>
        </authorList>
    </citation>
    <scope>STRUCTURE BY NMR OF 340-350</scope>
    <scope>INTERACTION WITH RHO</scope>
    <source>
        <tissue>Retina</tissue>
    </source>
</reference>
<reference evidence="22 23" key="13">
    <citation type="journal article" date="2001" name="Nature">
        <title>Structural determinants for regulation of phosphodiesterase by a G protein at 2.0 A.</title>
        <authorList>
            <person name="Slep K.C."/>
            <person name="Kercher M.A."/>
            <person name="He W."/>
            <person name="Cowan C.W."/>
            <person name="Wensel T.G."/>
            <person name="Sigler P.B."/>
        </authorList>
    </citation>
    <scope>X-RAY CRYSTALLOGRAPHY (1.94 ANGSTROMS) OF 26-350 IN COMPLEX WITH PDE6G AND RGS9</scope>
</reference>
<reference evidence="29" key="14">
    <citation type="journal article" date="2008" name="Nature">
        <title>Crystal structure of opsin in its G-protein-interacting conformation.</title>
        <authorList>
            <person name="Scheerer P."/>
            <person name="Park J.H."/>
            <person name="Hildebrand P.W."/>
            <person name="Kim Y.J."/>
            <person name="Krauss N."/>
            <person name="Choe H.-W."/>
            <person name="Hofmann K.P."/>
            <person name="Ernst O.P."/>
        </authorList>
    </citation>
    <scope>X-RAY CRYSTALLOGRAPHY (3.20 ANGSTROMS) OF 340-350 IN COMPLEX WITH RHO</scope>
</reference>
<reference evidence="30" key="15">
    <citation type="journal article" date="2011" name="Nature">
        <title>Crystal structure of metarhodopsin II.</title>
        <authorList>
            <person name="Choe H.W."/>
            <person name="Kim Y.J."/>
            <person name="Park J.H."/>
            <person name="Morizumi T."/>
            <person name="Pai E.F."/>
            <person name="Krauss N."/>
            <person name="Hofmann K.P."/>
            <person name="Scheerer P."/>
            <person name="Ernst O.P."/>
        </authorList>
    </citation>
    <scope>X-RAY CRYSTALLOGRAPHY (2.85 ANGSTROMS) OF 340-350 IN COMPLEX WITH RHO</scope>
</reference>
<reference evidence="28" key="16">
    <citation type="journal article" date="2011" name="Nature">
        <title>The structural basis of agonist-induced activation in constitutively active rhodopsin.</title>
        <authorList>
            <person name="Standfuss J."/>
            <person name="Edwards P.C."/>
            <person name="D'Antona A."/>
            <person name="Fransen M."/>
            <person name="Xie G."/>
            <person name="Oprian D.D."/>
            <person name="Schertler G.F."/>
        </authorList>
    </citation>
    <scope>X-RAY CRYSTALLOGRAPHY (3.00 ANGSTROMS) OF 340-350 IN COMPLEX WITH RHO</scope>
</reference>
<reference evidence="32" key="17">
    <citation type="journal article" date="2013" name="EMBO Rep.">
        <title>Insights into congenital stationary night blindness based on the structure of G90D rhodopsin.</title>
        <authorList>
            <person name="Singhal A."/>
            <person name="Ostermaier M.K."/>
            <person name="Vishnivetskiy S.A."/>
            <person name="Panneels V."/>
            <person name="Homan K.T."/>
            <person name="Tesmer J.J."/>
            <person name="Veprintsev D."/>
            <person name="Deupi X."/>
            <person name="Gurevich V.V."/>
            <person name="Schertler G.F."/>
            <person name="Standfuss J."/>
        </authorList>
    </citation>
    <scope>X-RAY CRYSTALLOGRAPHY (2.90 ANGSTROMS) OF 340-350 IN COMPLEX WITH RHO</scope>
</reference>
<comment type="function">
    <text evidence="1 8 13 18 19 20 21">Functions as a signal transducer for the rod photoreceptor RHO (PubMed:21285355, PubMed:23303210, PubMed:28655769, PubMed:8259210). Required for normal RHO-mediated light perception by the retina (By similarity). Guanine nucleotide-binding proteins (G proteins) function as transducers downstream of G protein-coupled receptors (GPCRs), such as the photoreceptor RHO. The alpha chain contains the guanine nucleotide binding site and alternates between an active, GTP-bound state and an inactive, GDP-bound state (PubMed:21285355, PubMed:28655769, PubMed:7969474, PubMed:8208289, PubMed:8259210). Activated RHO promotes GDP release and GTP binding (PubMed:21285355, PubMed:28655769). Signaling is mediated via downstream effector proteins, such as cGMP-phosphodiesterase (PubMed:21285355).</text>
</comment>
<comment type="subunit">
    <text evidence="1 5 7 8 9 10 11 12 13 14 15 16 17">Heterotrimeric G proteins are composed of 3 subunits alpha, beta and gamma (PubMed:21285355, PubMed:23303210, PubMed:28655769). The alpha chain contains the guanine nucleotide binding site (PubMed:21285355, PubMed:7969474, PubMed:8208289, PubMed:8259210). Interacts with RHO (PubMed:18818650, PubMed:21285355, PubMed:21389983, PubMed:21389988, PubMed:23303210, PubMed:23579341, PubMed:28655769, PubMed:9539726). Interacts with RGS9 and PDE6G (PubMed:11234020). Interacts (when myristoylated) with UNC119; interaction is required for localization in sensory neurons (By similarity).</text>
</comment>
<comment type="interaction">
    <interactant intactId="EBI-7052221">
        <id>P04695</id>
    </interactant>
    <interactant intactId="EBI-6979031">
        <id>Q28181</id>
        <label>CNGB1</label>
    </interactant>
    <organismsDiffer>false</organismsDiffer>
    <experiments>4</experiments>
</comment>
<comment type="interaction">
    <interactant intactId="EBI-7052221">
        <id>P04695</id>
    </interactant>
    <interactant intactId="EBI-8592832">
        <id>P02699</id>
        <label>RHO</label>
    </interactant>
    <organismsDiffer>false</organismsDiffer>
    <experiments>3</experiments>
</comment>
<comment type="subcellular location">
    <subcellularLocation>
        <location evidence="11">Cell projection</location>
        <location evidence="11">Cilium</location>
        <location evidence="11">Photoreceptor outer segment</location>
    </subcellularLocation>
    <subcellularLocation>
        <location evidence="11 13">Membrane</location>
        <topology evidence="11 13">Peripheral membrane protein</topology>
    </subcellularLocation>
    <subcellularLocation>
        <location evidence="2">Photoreceptor inner segment</location>
    </subcellularLocation>
    <text evidence="2">Localizes mainly in the outer segment in the dark-adapted state, whereas is translocated to the inner part of the photoreceptors in the light-adapted state. During dark-adapted conditions, in the presence of UNC119 mislocalizes from the outer segment to the inner part of rod photoreceptors which leads to decreased photoreceptor damage caused by light.</text>
</comment>
<comment type="tissue specificity">
    <text>Rod.</text>
</comment>
<dbReference type="EMBL" id="K03253">
    <property type="protein sequence ID" value="AAA30787.1"/>
    <property type="molecule type" value="mRNA"/>
</dbReference>
<dbReference type="EMBL" id="K03254">
    <property type="protein sequence ID" value="AAA30791.1"/>
    <property type="molecule type" value="mRNA"/>
</dbReference>
<dbReference type="EMBL" id="X02440">
    <property type="protein sequence ID" value="CAA26285.1"/>
    <property type="molecule type" value="mRNA"/>
</dbReference>
<dbReference type="PIR" id="A22244">
    <property type="entry name" value="RGBOT1"/>
</dbReference>
<dbReference type="RefSeq" id="NP_851365.1">
    <property type="nucleotide sequence ID" value="NM_181022.2"/>
</dbReference>
<dbReference type="RefSeq" id="XP_010815966.1">
    <property type="nucleotide sequence ID" value="XM_010817664.2"/>
</dbReference>
<dbReference type="PDB" id="1AQG">
    <property type="method" value="NMR"/>
    <property type="chains" value="A=340-350"/>
</dbReference>
<dbReference type="PDB" id="1FQJ">
    <property type="method" value="X-ray"/>
    <property type="resolution" value="2.02 A"/>
    <property type="chains" value="A/D=26-215, A/D=295-350"/>
</dbReference>
<dbReference type="PDB" id="1FQK">
    <property type="method" value="X-ray"/>
    <property type="resolution" value="2.30 A"/>
    <property type="chains" value="A/C=26-215, A/C=295-350"/>
</dbReference>
<dbReference type="PDB" id="1GOT">
    <property type="method" value="X-ray"/>
    <property type="resolution" value="2.00 A"/>
    <property type="chains" value="A=1-350"/>
</dbReference>
<dbReference type="PDB" id="1LVZ">
    <property type="method" value="NMR"/>
    <property type="chains" value="A=340-350"/>
</dbReference>
<dbReference type="PDB" id="1TAD">
    <property type="method" value="X-ray"/>
    <property type="resolution" value="1.70 A"/>
    <property type="chains" value="A/B/C=27-350"/>
</dbReference>
<dbReference type="PDB" id="1TAG">
    <property type="method" value="X-ray"/>
    <property type="resolution" value="1.80 A"/>
    <property type="chains" value="A=27-350"/>
</dbReference>
<dbReference type="PDB" id="1TND">
    <property type="method" value="X-ray"/>
    <property type="resolution" value="2.20 A"/>
    <property type="chains" value="A/B/C=27-350"/>
</dbReference>
<dbReference type="PDB" id="2X72">
    <property type="method" value="X-ray"/>
    <property type="resolution" value="3.00 A"/>
    <property type="chains" value="B=340-350"/>
</dbReference>
<dbReference type="PDB" id="3DQB">
    <property type="method" value="X-ray"/>
    <property type="resolution" value="3.20 A"/>
    <property type="chains" value="B=340-350"/>
</dbReference>
<dbReference type="PDB" id="3PQR">
    <property type="method" value="X-ray"/>
    <property type="resolution" value="2.85 A"/>
    <property type="chains" value="B=340-350"/>
</dbReference>
<dbReference type="PDB" id="3V00">
    <property type="method" value="X-ray"/>
    <property type="resolution" value="2.90 A"/>
    <property type="chains" value="A/B/C=1-215, A/B/C=295-350"/>
</dbReference>
<dbReference type="PDB" id="4BEY">
    <property type="method" value="X-ray"/>
    <property type="resolution" value="2.90 A"/>
    <property type="chains" value="B=340-350"/>
</dbReference>
<dbReference type="PDB" id="4J4Q">
    <property type="method" value="X-ray"/>
    <property type="resolution" value="2.65 A"/>
    <property type="chains" value="B=340-350"/>
</dbReference>
<dbReference type="PDB" id="6OY9">
    <property type="method" value="EM"/>
    <property type="resolution" value="3.90 A"/>
    <property type="chains" value="A=1-350"/>
</dbReference>
<dbReference type="PDB" id="6OYA">
    <property type="method" value="EM"/>
    <property type="resolution" value="3.30 A"/>
    <property type="chains" value="A=1-350"/>
</dbReference>
<dbReference type="PDB" id="7JSN">
    <property type="method" value="EM"/>
    <property type="resolution" value="3.20 A"/>
    <property type="chains" value="E/F=1-350"/>
</dbReference>
<dbReference type="PDB" id="8XGR">
    <property type="method" value="EM"/>
    <property type="resolution" value="3.20 A"/>
    <property type="chains" value="G=1-350"/>
</dbReference>
<dbReference type="PDBsum" id="1AQG"/>
<dbReference type="PDBsum" id="1FQJ"/>
<dbReference type="PDBsum" id="1FQK"/>
<dbReference type="PDBsum" id="1GOT"/>
<dbReference type="PDBsum" id="1LVZ"/>
<dbReference type="PDBsum" id="1TAD"/>
<dbReference type="PDBsum" id="1TAG"/>
<dbReference type="PDBsum" id="1TND"/>
<dbReference type="PDBsum" id="2X72"/>
<dbReference type="PDBsum" id="3DQB"/>
<dbReference type="PDBsum" id="3PQR"/>
<dbReference type="PDBsum" id="3V00"/>
<dbReference type="PDBsum" id="4BEY"/>
<dbReference type="PDBsum" id="4J4Q"/>
<dbReference type="PDBsum" id="6OY9"/>
<dbReference type="PDBsum" id="6OYA"/>
<dbReference type="PDBsum" id="7JSN"/>
<dbReference type="PDBsum" id="8XGR"/>
<dbReference type="EMDB" id="EMD-20222"/>
<dbReference type="EMDB" id="EMD-20223"/>
<dbReference type="EMDB" id="EMD-22458"/>
<dbReference type="SMR" id="P04695"/>
<dbReference type="BioGRID" id="159108">
    <property type="interactions" value="1"/>
</dbReference>
<dbReference type="CORUM" id="P04695"/>
<dbReference type="DIP" id="DIP-29226N"/>
<dbReference type="FunCoup" id="P04695">
    <property type="interactions" value="616"/>
</dbReference>
<dbReference type="IntAct" id="P04695">
    <property type="interactions" value="5"/>
</dbReference>
<dbReference type="MINT" id="P04695"/>
<dbReference type="STRING" id="9913.ENSBTAP00000023990"/>
<dbReference type="iPTMnet" id="P04695"/>
<dbReference type="PaxDb" id="9913-ENSBTAP00000023990"/>
<dbReference type="GeneID" id="281794"/>
<dbReference type="KEGG" id="bta:281794"/>
<dbReference type="CTD" id="2779"/>
<dbReference type="VEuPathDB" id="HostDB:ENSBTAG00000018020"/>
<dbReference type="eggNOG" id="KOG0082">
    <property type="taxonomic scope" value="Eukaryota"/>
</dbReference>
<dbReference type="HOGENOM" id="CLU_014184_6_0_1"/>
<dbReference type="InParanoid" id="P04695"/>
<dbReference type="OMA" id="INYGHPD"/>
<dbReference type="OrthoDB" id="5817230at2759"/>
<dbReference type="TreeFam" id="TF300673"/>
<dbReference type="Reactome" id="R-BTA-2485179">
    <property type="pathway name" value="Activation of the phototransduction cascade"/>
</dbReference>
<dbReference type="Reactome" id="R-BTA-2514859">
    <property type="pathway name" value="Inactivation, recovery and regulation of the phototransduction cascade"/>
</dbReference>
<dbReference type="Reactome" id="R-BTA-418594">
    <property type="pathway name" value="G alpha (i) signalling events"/>
</dbReference>
<dbReference type="EvolutionaryTrace" id="P04695"/>
<dbReference type="Proteomes" id="UP000009136">
    <property type="component" value="Chromosome 22"/>
</dbReference>
<dbReference type="Bgee" id="ENSBTAG00000018020">
    <property type="expression patterns" value="Expressed in retina and 89 other cell types or tissues"/>
</dbReference>
<dbReference type="GO" id="GO:0005737">
    <property type="term" value="C:cytoplasm"/>
    <property type="evidence" value="ECO:0000318"/>
    <property type="project" value="GO_Central"/>
</dbReference>
<dbReference type="GO" id="GO:0097648">
    <property type="term" value="C:G protein-coupled receptor complex"/>
    <property type="evidence" value="ECO:0000314"/>
    <property type="project" value="CAFA"/>
</dbReference>
<dbReference type="GO" id="GO:0005834">
    <property type="term" value="C:heterotrimeric G-protein complex"/>
    <property type="evidence" value="ECO:0000318"/>
    <property type="project" value="GO_Central"/>
</dbReference>
<dbReference type="GO" id="GO:0097381">
    <property type="term" value="C:photoreceptor disc membrane"/>
    <property type="evidence" value="ECO:0000304"/>
    <property type="project" value="Reactome"/>
</dbReference>
<dbReference type="GO" id="GO:0001917">
    <property type="term" value="C:photoreceptor inner segment"/>
    <property type="evidence" value="ECO:0000250"/>
    <property type="project" value="UniProtKB"/>
</dbReference>
<dbReference type="GO" id="GO:0042622">
    <property type="term" value="C:photoreceptor outer segment membrane"/>
    <property type="evidence" value="ECO:0000314"/>
    <property type="project" value="UniProtKB"/>
</dbReference>
<dbReference type="GO" id="GO:0000035">
    <property type="term" value="F:acyl binding"/>
    <property type="evidence" value="ECO:0000314"/>
    <property type="project" value="UniProtKB"/>
</dbReference>
<dbReference type="GO" id="GO:0001664">
    <property type="term" value="F:G protein-coupled receptor binding"/>
    <property type="evidence" value="ECO:0000353"/>
    <property type="project" value="CAFA"/>
</dbReference>
<dbReference type="GO" id="GO:0031683">
    <property type="term" value="F:G-protein beta/gamma-subunit complex binding"/>
    <property type="evidence" value="ECO:0000318"/>
    <property type="project" value="GO_Central"/>
</dbReference>
<dbReference type="GO" id="GO:0019003">
    <property type="term" value="F:GDP binding"/>
    <property type="evidence" value="ECO:0000314"/>
    <property type="project" value="UniProtKB"/>
</dbReference>
<dbReference type="GO" id="GO:0005525">
    <property type="term" value="F:GTP binding"/>
    <property type="evidence" value="ECO:0000314"/>
    <property type="project" value="UniProtKB"/>
</dbReference>
<dbReference type="GO" id="GO:0003924">
    <property type="term" value="F:GTPase activity"/>
    <property type="evidence" value="ECO:0000318"/>
    <property type="project" value="GO_Central"/>
</dbReference>
<dbReference type="GO" id="GO:0046872">
    <property type="term" value="F:metal ion binding"/>
    <property type="evidence" value="ECO:0007669"/>
    <property type="project" value="UniProtKB-KW"/>
</dbReference>
<dbReference type="GO" id="GO:0019901">
    <property type="term" value="F:protein kinase binding"/>
    <property type="evidence" value="ECO:0000314"/>
    <property type="project" value="UniProtKB"/>
</dbReference>
<dbReference type="GO" id="GO:0007188">
    <property type="term" value="P:adenylate cyclase-modulating G protein-coupled receptor signaling pathway"/>
    <property type="evidence" value="ECO:0000318"/>
    <property type="project" value="GO_Central"/>
</dbReference>
<dbReference type="GO" id="GO:0050908">
    <property type="term" value="P:detection of light stimulus involved in visual perception"/>
    <property type="evidence" value="ECO:0000318"/>
    <property type="project" value="GO_Central"/>
</dbReference>
<dbReference type="GO" id="GO:0051344">
    <property type="term" value="P:negative regulation of cyclic-nucleotide phosphodiesterase activity"/>
    <property type="evidence" value="ECO:0000314"/>
    <property type="project" value="UniProtKB"/>
</dbReference>
<dbReference type="GO" id="GO:0007602">
    <property type="term" value="P:phototransduction"/>
    <property type="evidence" value="ECO:0000303"/>
    <property type="project" value="UniProtKB"/>
</dbReference>
<dbReference type="GO" id="GO:0007603">
    <property type="term" value="P:phototransduction, visible light"/>
    <property type="evidence" value="ECO:0000318"/>
    <property type="project" value="GO_Central"/>
</dbReference>
<dbReference type="GO" id="GO:0009416">
    <property type="term" value="P:response to light stimulus"/>
    <property type="evidence" value="ECO:0000314"/>
    <property type="project" value="UniProtKB"/>
</dbReference>
<dbReference type="CDD" id="cd00066">
    <property type="entry name" value="G-alpha"/>
    <property type="match status" value="1"/>
</dbReference>
<dbReference type="DisProt" id="DP00273"/>
<dbReference type="FunFam" id="1.10.400.10:FF:000001">
    <property type="entry name" value="Guanine nucleotide-binding protein G(I) subunit alpha"/>
    <property type="match status" value="1"/>
</dbReference>
<dbReference type="FunFam" id="3.40.50.300:FF:000720">
    <property type="entry name" value="Guanine nucleotide-binding protein G(k) subunit alpha"/>
    <property type="match status" value="1"/>
</dbReference>
<dbReference type="FunFam" id="3.40.50.300:FF:000256">
    <property type="entry name" value="Guanine nucleotide-binding protein G(t) subunit alpha"/>
    <property type="match status" value="1"/>
</dbReference>
<dbReference type="Gene3D" id="1.10.400.10">
    <property type="entry name" value="GI Alpha 1, domain 2-like"/>
    <property type="match status" value="1"/>
</dbReference>
<dbReference type="Gene3D" id="3.40.50.300">
    <property type="entry name" value="P-loop containing nucleotide triphosphate hydrolases"/>
    <property type="match status" value="1"/>
</dbReference>
<dbReference type="InterPro" id="IPR001408">
    <property type="entry name" value="Gprotein_alpha_I"/>
</dbReference>
<dbReference type="InterPro" id="IPR001019">
    <property type="entry name" value="Gprotein_alpha_su"/>
</dbReference>
<dbReference type="InterPro" id="IPR011025">
    <property type="entry name" value="GproteinA_insert"/>
</dbReference>
<dbReference type="InterPro" id="IPR027417">
    <property type="entry name" value="P-loop_NTPase"/>
</dbReference>
<dbReference type="PANTHER" id="PTHR10218">
    <property type="entry name" value="GTP-BINDING PROTEIN ALPHA SUBUNIT"/>
    <property type="match status" value="1"/>
</dbReference>
<dbReference type="PANTHER" id="PTHR10218:SF67">
    <property type="entry name" value="GUANINE NUCLEOTIDE-BINDING PROTEIN G(T) SUBUNIT ALPHA-1"/>
    <property type="match status" value="1"/>
</dbReference>
<dbReference type="Pfam" id="PF00503">
    <property type="entry name" value="G-alpha"/>
    <property type="match status" value="1"/>
</dbReference>
<dbReference type="PRINTS" id="PR00318">
    <property type="entry name" value="GPROTEINA"/>
</dbReference>
<dbReference type="PRINTS" id="PR00441">
    <property type="entry name" value="GPROTEINAI"/>
</dbReference>
<dbReference type="SMART" id="SM00275">
    <property type="entry name" value="G_alpha"/>
    <property type="match status" value="1"/>
</dbReference>
<dbReference type="SUPFAM" id="SSF52540">
    <property type="entry name" value="P-loop containing nucleoside triphosphate hydrolases"/>
    <property type="match status" value="1"/>
</dbReference>
<dbReference type="SUPFAM" id="SSF47895">
    <property type="entry name" value="Transducin (alpha subunit), insertion domain"/>
    <property type="match status" value="1"/>
</dbReference>
<dbReference type="PROSITE" id="PS51882">
    <property type="entry name" value="G_ALPHA"/>
    <property type="match status" value="1"/>
</dbReference>